<name>PNP_SYNAS</name>
<reference key="1">
    <citation type="journal article" date="2007" name="Proc. Natl. Acad. Sci. U.S.A.">
        <title>The genome of Syntrophus aciditrophicus: life at the thermodynamic limit of microbial growth.</title>
        <authorList>
            <person name="McInerney M.J."/>
            <person name="Rohlin L."/>
            <person name="Mouttaki H."/>
            <person name="Kim U."/>
            <person name="Krupp R.S."/>
            <person name="Rios-Hernandez L."/>
            <person name="Sieber J."/>
            <person name="Struchtemeyer C.G."/>
            <person name="Bhattacharyya A."/>
            <person name="Campbell J.W."/>
            <person name="Gunsalus R.P."/>
        </authorList>
    </citation>
    <scope>NUCLEOTIDE SEQUENCE [LARGE SCALE GENOMIC DNA]</scope>
    <source>
        <strain>SB</strain>
    </source>
</reference>
<gene>
    <name evidence="1" type="primary">pnp</name>
    <name type="ordered locus">SYNAS_26690</name>
    <name type="ORF">SYN_01780</name>
</gene>
<dbReference type="EC" id="2.7.7.8" evidence="1"/>
<dbReference type="EMBL" id="CP000252">
    <property type="protein sequence ID" value="ABC78548.1"/>
    <property type="molecule type" value="Genomic_DNA"/>
</dbReference>
<dbReference type="RefSeq" id="WP_011418567.1">
    <property type="nucleotide sequence ID" value="NC_007759.1"/>
</dbReference>
<dbReference type="SMR" id="Q2LWT4"/>
<dbReference type="FunCoup" id="Q2LWT4">
    <property type="interactions" value="498"/>
</dbReference>
<dbReference type="STRING" id="56780.SYN_01780"/>
<dbReference type="KEGG" id="sat:SYN_01780"/>
<dbReference type="eggNOG" id="COG1185">
    <property type="taxonomic scope" value="Bacteria"/>
</dbReference>
<dbReference type="HOGENOM" id="CLU_004217_2_2_7"/>
<dbReference type="InParanoid" id="Q2LWT4"/>
<dbReference type="OrthoDB" id="9804305at2"/>
<dbReference type="Proteomes" id="UP000001933">
    <property type="component" value="Chromosome"/>
</dbReference>
<dbReference type="GO" id="GO:0005829">
    <property type="term" value="C:cytosol"/>
    <property type="evidence" value="ECO:0007669"/>
    <property type="project" value="TreeGrafter"/>
</dbReference>
<dbReference type="GO" id="GO:0000175">
    <property type="term" value="F:3'-5'-RNA exonuclease activity"/>
    <property type="evidence" value="ECO:0007669"/>
    <property type="project" value="TreeGrafter"/>
</dbReference>
<dbReference type="GO" id="GO:0000287">
    <property type="term" value="F:magnesium ion binding"/>
    <property type="evidence" value="ECO:0007669"/>
    <property type="project" value="UniProtKB-UniRule"/>
</dbReference>
<dbReference type="GO" id="GO:0004654">
    <property type="term" value="F:polyribonucleotide nucleotidyltransferase activity"/>
    <property type="evidence" value="ECO:0007669"/>
    <property type="project" value="UniProtKB-UniRule"/>
</dbReference>
<dbReference type="GO" id="GO:0003723">
    <property type="term" value="F:RNA binding"/>
    <property type="evidence" value="ECO:0007669"/>
    <property type="project" value="UniProtKB-UniRule"/>
</dbReference>
<dbReference type="GO" id="GO:0006402">
    <property type="term" value="P:mRNA catabolic process"/>
    <property type="evidence" value="ECO:0007669"/>
    <property type="project" value="UniProtKB-UniRule"/>
</dbReference>
<dbReference type="GO" id="GO:0006396">
    <property type="term" value="P:RNA processing"/>
    <property type="evidence" value="ECO:0007669"/>
    <property type="project" value="InterPro"/>
</dbReference>
<dbReference type="CDD" id="cd02393">
    <property type="entry name" value="KH-I_PNPase"/>
    <property type="match status" value="1"/>
</dbReference>
<dbReference type="CDD" id="cd11363">
    <property type="entry name" value="RNase_PH_PNPase_1"/>
    <property type="match status" value="1"/>
</dbReference>
<dbReference type="CDD" id="cd11364">
    <property type="entry name" value="RNase_PH_PNPase_2"/>
    <property type="match status" value="1"/>
</dbReference>
<dbReference type="CDD" id="cd04472">
    <property type="entry name" value="S1_PNPase"/>
    <property type="match status" value="1"/>
</dbReference>
<dbReference type="FunFam" id="2.40.50.140:FF:000023">
    <property type="entry name" value="Polyribonucleotide nucleotidyltransferase"/>
    <property type="match status" value="1"/>
</dbReference>
<dbReference type="FunFam" id="3.30.1370.10:FF:000001">
    <property type="entry name" value="Polyribonucleotide nucleotidyltransferase"/>
    <property type="match status" value="1"/>
</dbReference>
<dbReference type="FunFam" id="3.30.230.70:FF:000001">
    <property type="entry name" value="Polyribonucleotide nucleotidyltransferase"/>
    <property type="match status" value="1"/>
</dbReference>
<dbReference type="FunFam" id="3.30.230.70:FF:000002">
    <property type="entry name" value="Polyribonucleotide nucleotidyltransferase"/>
    <property type="match status" value="1"/>
</dbReference>
<dbReference type="Gene3D" id="3.30.230.70">
    <property type="entry name" value="GHMP Kinase, N-terminal domain"/>
    <property type="match status" value="2"/>
</dbReference>
<dbReference type="Gene3D" id="3.30.1370.10">
    <property type="entry name" value="K Homology domain, type 1"/>
    <property type="match status" value="1"/>
</dbReference>
<dbReference type="Gene3D" id="2.40.50.140">
    <property type="entry name" value="Nucleic acid-binding proteins"/>
    <property type="match status" value="1"/>
</dbReference>
<dbReference type="HAMAP" id="MF_01595">
    <property type="entry name" value="PNPase"/>
    <property type="match status" value="1"/>
</dbReference>
<dbReference type="InterPro" id="IPR001247">
    <property type="entry name" value="ExoRNase_PH_dom1"/>
</dbReference>
<dbReference type="InterPro" id="IPR015847">
    <property type="entry name" value="ExoRNase_PH_dom2"/>
</dbReference>
<dbReference type="InterPro" id="IPR036345">
    <property type="entry name" value="ExoRNase_PH_dom2_sf"/>
</dbReference>
<dbReference type="InterPro" id="IPR004087">
    <property type="entry name" value="KH_dom"/>
</dbReference>
<dbReference type="InterPro" id="IPR004088">
    <property type="entry name" value="KH_dom_type_1"/>
</dbReference>
<dbReference type="InterPro" id="IPR036612">
    <property type="entry name" value="KH_dom_type_1_sf"/>
</dbReference>
<dbReference type="InterPro" id="IPR012340">
    <property type="entry name" value="NA-bd_OB-fold"/>
</dbReference>
<dbReference type="InterPro" id="IPR012162">
    <property type="entry name" value="PNPase"/>
</dbReference>
<dbReference type="InterPro" id="IPR027408">
    <property type="entry name" value="PNPase/RNase_PH_dom_sf"/>
</dbReference>
<dbReference type="InterPro" id="IPR015848">
    <property type="entry name" value="PNPase_PH_RNA-bd_bac/org-type"/>
</dbReference>
<dbReference type="InterPro" id="IPR036456">
    <property type="entry name" value="PNPase_PH_RNA-bd_sf"/>
</dbReference>
<dbReference type="InterPro" id="IPR020568">
    <property type="entry name" value="Ribosomal_Su5_D2-typ_SF"/>
</dbReference>
<dbReference type="InterPro" id="IPR003029">
    <property type="entry name" value="S1_domain"/>
</dbReference>
<dbReference type="NCBIfam" id="TIGR03591">
    <property type="entry name" value="polynuc_phos"/>
    <property type="match status" value="1"/>
</dbReference>
<dbReference type="NCBIfam" id="NF008805">
    <property type="entry name" value="PRK11824.1"/>
    <property type="match status" value="1"/>
</dbReference>
<dbReference type="PANTHER" id="PTHR11252">
    <property type="entry name" value="POLYRIBONUCLEOTIDE NUCLEOTIDYLTRANSFERASE"/>
    <property type="match status" value="1"/>
</dbReference>
<dbReference type="PANTHER" id="PTHR11252:SF0">
    <property type="entry name" value="POLYRIBONUCLEOTIDE NUCLEOTIDYLTRANSFERASE 1, MITOCHONDRIAL"/>
    <property type="match status" value="1"/>
</dbReference>
<dbReference type="Pfam" id="PF00013">
    <property type="entry name" value="KH_1"/>
    <property type="match status" value="1"/>
</dbReference>
<dbReference type="Pfam" id="PF03726">
    <property type="entry name" value="PNPase"/>
    <property type="match status" value="1"/>
</dbReference>
<dbReference type="Pfam" id="PF01138">
    <property type="entry name" value="RNase_PH"/>
    <property type="match status" value="2"/>
</dbReference>
<dbReference type="Pfam" id="PF03725">
    <property type="entry name" value="RNase_PH_C"/>
    <property type="match status" value="2"/>
</dbReference>
<dbReference type="Pfam" id="PF00575">
    <property type="entry name" value="S1"/>
    <property type="match status" value="1"/>
</dbReference>
<dbReference type="PIRSF" id="PIRSF005499">
    <property type="entry name" value="PNPase"/>
    <property type="match status" value="1"/>
</dbReference>
<dbReference type="SMART" id="SM00322">
    <property type="entry name" value="KH"/>
    <property type="match status" value="1"/>
</dbReference>
<dbReference type="SMART" id="SM00316">
    <property type="entry name" value="S1"/>
    <property type="match status" value="1"/>
</dbReference>
<dbReference type="SUPFAM" id="SSF54791">
    <property type="entry name" value="Eukaryotic type KH-domain (KH-domain type I)"/>
    <property type="match status" value="1"/>
</dbReference>
<dbReference type="SUPFAM" id="SSF50249">
    <property type="entry name" value="Nucleic acid-binding proteins"/>
    <property type="match status" value="1"/>
</dbReference>
<dbReference type="SUPFAM" id="SSF46915">
    <property type="entry name" value="Polynucleotide phosphorylase/guanosine pentaphosphate synthase (PNPase/GPSI), domain 3"/>
    <property type="match status" value="1"/>
</dbReference>
<dbReference type="SUPFAM" id="SSF55666">
    <property type="entry name" value="Ribonuclease PH domain 2-like"/>
    <property type="match status" value="2"/>
</dbReference>
<dbReference type="SUPFAM" id="SSF54211">
    <property type="entry name" value="Ribosomal protein S5 domain 2-like"/>
    <property type="match status" value="2"/>
</dbReference>
<dbReference type="PROSITE" id="PS50084">
    <property type="entry name" value="KH_TYPE_1"/>
    <property type="match status" value="1"/>
</dbReference>
<dbReference type="PROSITE" id="PS50126">
    <property type="entry name" value="S1"/>
    <property type="match status" value="1"/>
</dbReference>
<organism>
    <name type="scientific">Syntrophus aciditrophicus (strain SB)</name>
    <dbReference type="NCBI Taxonomy" id="56780"/>
    <lineage>
        <taxon>Bacteria</taxon>
        <taxon>Pseudomonadati</taxon>
        <taxon>Thermodesulfobacteriota</taxon>
        <taxon>Syntrophia</taxon>
        <taxon>Syntrophales</taxon>
        <taxon>Syntrophaceae</taxon>
        <taxon>Syntrophus</taxon>
    </lineage>
</organism>
<accession>Q2LWT4</accession>
<feature type="chain" id="PRO_0000329908" description="Polyribonucleotide nucleotidyltransferase">
    <location>
        <begin position="1"/>
        <end position="705"/>
    </location>
</feature>
<feature type="domain" description="KH" evidence="1">
    <location>
        <begin position="561"/>
        <end position="620"/>
    </location>
</feature>
<feature type="domain" description="S1 motif" evidence="1">
    <location>
        <begin position="630"/>
        <end position="698"/>
    </location>
</feature>
<feature type="binding site" evidence="1">
    <location>
        <position position="494"/>
    </location>
    <ligand>
        <name>Mg(2+)</name>
        <dbReference type="ChEBI" id="CHEBI:18420"/>
    </ligand>
</feature>
<feature type="binding site" evidence="1">
    <location>
        <position position="500"/>
    </location>
    <ligand>
        <name>Mg(2+)</name>
        <dbReference type="ChEBI" id="CHEBI:18420"/>
    </ligand>
</feature>
<protein>
    <recommendedName>
        <fullName evidence="1">Polyribonucleotide nucleotidyltransferase</fullName>
        <ecNumber evidence="1">2.7.7.8</ecNumber>
    </recommendedName>
    <alternativeName>
        <fullName evidence="1">Polynucleotide phosphorylase</fullName>
        <shortName evidence="1">PNPase</shortName>
    </alternativeName>
</protein>
<proteinExistence type="inferred from homology"/>
<sequence>MSTIFSAEFAGRNISIKTGYVAGQADGAVMVIYGDTVVMVTAVSLKTAREGVDFLPLTVDYQEMTYAAGKIPGGFFKREGRPNEREILTSRVIDRSIRPLFPKGYCYETQLVATVLSVDSENDSDVAALLAASAALEISDIPFKGPIVGVRVGRVDGQFICNPSKLEQEKGDLNLYLVGRKVVPGTEGRPYDVNLVMLEGEAQQVEEEHVIAGIDFGLECMRPVIELQDQLRSALGKPKREFEAVEIDDALLAEVSEKAAVRMREAYRMSRKLDRHAALDEIRNSVLKAVTADEAGLRLRTAAALEALEKRIVRDVILKEKQRIDGRSYAEIRAISAEVGILPRAHGSALFNRGETQSLAALALGTSSDEQRLDYVAGEETRSFILHYNFPPYCVGEARPLRSPGRREIGHGNLARKALMPVIPSPEEFPYTIRIVSEILSSNGSSSMATVCGGLLCLMDGGVPVKGVVAGIAMGLLKEGEQVVILSDILGDEDHAGDMDFKVCGTSKGITAMQMDIKIDGINEDILRKALAQAREGRLFIIDKILATISEPRKELSIYAPRITTVKVKPEKVRAVIGTGGKNIRQIVSETGVTIDVEDDGTVTIASSDMEASARAIAMVRWLTEDAEVGKIYRGTVKKVVDFGAFVEILPGTEGLLHISQLAKERVNKVTDIVNEGDEVIVKVLEVDKQGKIRLSRKEALGSDI</sequence>
<comment type="function">
    <text evidence="1">Involved in mRNA degradation. Catalyzes the phosphorolysis of single-stranded polyribonucleotides processively in the 3'- to 5'-direction.</text>
</comment>
<comment type="catalytic activity">
    <reaction evidence="1">
        <text>RNA(n+1) + phosphate = RNA(n) + a ribonucleoside 5'-diphosphate</text>
        <dbReference type="Rhea" id="RHEA:22096"/>
        <dbReference type="Rhea" id="RHEA-COMP:14527"/>
        <dbReference type="Rhea" id="RHEA-COMP:17342"/>
        <dbReference type="ChEBI" id="CHEBI:43474"/>
        <dbReference type="ChEBI" id="CHEBI:57930"/>
        <dbReference type="ChEBI" id="CHEBI:140395"/>
        <dbReference type="EC" id="2.7.7.8"/>
    </reaction>
</comment>
<comment type="cofactor">
    <cofactor evidence="1">
        <name>Mg(2+)</name>
        <dbReference type="ChEBI" id="CHEBI:18420"/>
    </cofactor>
</comment>
<comment type="subcellular location">
    <subcellularLocation>
        <location evidence="1">Cytoplasm</location>
    </subcellularLocation>
</comment>
<comment type="similarity">
    <text evidence="1">Belongs to the polyribonucleotide nucleotidyltransferase family.</text>
</comment>
<evidence type="ECO:0000255" key="1">
    <source>
        <dbReference type="HAMAP-Rule" id="MF_01595"/>
    </source>
</evidence>
<keyword id="KW-0963">Cytoplasm</keyword>
<keyword id="KW-0460">Magnesium</keyword>
<keyword id="KW-0479">Metal-binding</keyword>
<keyword id="KW-0548">Nucleotidyltransferase</keyword>
<keyword id="KW-1185">Reference proteome</keyword>
<keyword id="KW-0694">RNA-binding</keyword>
<keyword id="KW-0808">Transferase</keyword>